<proteinExistence type="evidence at transcript level"/>
<gene>
    <name type="primary">PGM1</name>
</gene>
<reference key="1">
    <citation type="journal article" date="1995" name="Plant Mol. Biol.">
        <title>A salinity-induced gene from the halophyte M. crystallinum encodes a glycolytic enzyme, cofactor-independent phosphoglyceromutase.</title>
        <authorList>
            <person name="Forsthoefel N.R."/>
            <person name="Vernon D.M."/>
            <person name="Cushman J.C."/>
        </authorList>
    </citation>
    <scope>NUCLEOTIDE SEQUENCE [MRNA]</scope>
    <source>
        <tissue>Root</tissue>
    </source>
</reference>
<organism>
    <name type="scientific">Mesembryanthemum crystallinum</name>
    <name type="common">Common ice plant</name>
    <name type="synonym">Cryophytum crystallinum</name>
    <dbReference type="NCBI Taxonomy" id="3544"/>
    <lineage>
        <taxon>Eukaryota</taxon>
        <taxon>Viridiplantae</taxon>
        <taxon>Streptophyta</taxon>
        <taxon>Embryophyta</taxon>
        <taxon>Tracheophyta</taxon>
        <taxon>Spermatophyta</taxon>
        <taxon>Magnoliopsida</taxon>
        <taxon>eudicotyledons</taxon>
        <taxon>Gunneridae</taxon>
        <taxon>Pentapetalae</taxon>
        <taxon>Caryophyllales</taxon>
        <taxon>Aizoaceae</taxon>
        <taxon>Mesembryanthemum</taxon>
        <taxon>Mesembryanthemum subgen. Cryophytum</taxon>
    </lineage>
</organism>
<feature type="chain" id="PRO_0000212111" description="2,3-bisphosphoglycerate-independent phosphoglycerate mutase">
    <location>
        <begin position="1"/>
        <end position="559"/>
    </location>
</feature>
<feature type="active site" description="Phosphoserine intermediate" evidence="2">
    <location>
        <position position="81"/>
    </location>
</feature>
<feature type="binding site" evidence="2">
    <location>
        <position position="28"/>
    </location>
    <ligand>
        <name>Mn(2+)</name>
        <dbReference type="ChEBI" id="CHEBI:29035"/>
        <label>2</label>
    </ligand>
</feature>
<feature type="binding site" evidence="2">
    <location>
        <position position="81"/>
    </location>
    <ligand>
        <name>Mn(2+)</name>
        <dbReference type="ChEBI" id="CHEBI:29035"/>
        <label>2</label>
    </ligand>
</feature>
<feature type="binding site" evidence="2">
    <location>
        <position position="140"/>
    </location>
    <ligand>
        <name>substrate</name>
    </ligand>
</feature>
<feature type="binding site" evidence="2">
    <location>
        <begin position="170"/>
        <end position="171"/>
    </location>
    <ligand>
        <name>substrate</name>
    </ligand>
</feature>
<feature type="binding site" evidence="2">
    <location>
        <position position="206"/>
    </location>
    <ligand>
        <name>substrate</name>
    </ligand>
</feature>
<feature type="binding site" evidence="2">
    <location>
        <position position="213"/>
    </location>
    <ligand>
        <name>substrate</name>
    </ligand>
</feature>
<feature type="binding site" evidence="2">
    <location>
        <begin position="286"/>
        <end position="289"/>
    </location>
    <ligand>
        <name>substrate</name>
    </ligand>
</feature>
<feature type="binding site" evidence="2">
    <location>
        <position position="361"/>
    </location>
    <ligand>
        <name>substrate</name>
    </ligand>
</feature>
<feature type="binding site" evidence="2">
    <location>
        <position position="430"/>
    </location>
    <ligand>
        <name>Mn(2+)</name>
        <dbReference type="ChEBI" id="CHEBI:29035"/>
        <label>1</label>
    </ligand>
</feature>
<feature type="binding site" evidence="2">
    <location>
        <position position="434"/>
    </location>
    <ligand>
        <name>Mn(2+)</name>
        <dbReference type="ChEBI" id="CHEBI:29035"/>
        <label>1</label>
    </ligand>
</feature>
<feature type="binding site" evidence="2">
    <location>
        <position position="471"/>
    </location>
    <ligand>
        <name>Mn(2+)</name>
        <dbReference type="ChEBI" id="CHEBI:29035"/>
        <label>2</label>
    </ligand>
</feature>
<feature type="binding site" evidence="2">
    <location>
        <position position="472"/>
    </location>
    <ligand>
        <name>Mn(2+)</name>
        <dbReference type="ChEBI" id="CHEBI:29035"/>
        <label>2</label>
    </ligand>
</feature>
<feature type="binding site" evidence="2">
    <location>
        <position position="501"/>
    </location>
    <ligand>
        <name>Mn(2+)</name>
        <dbReference type="ChEBI" id="CHEBI:29035"/>
        <label>1</label>
    </ligand>
</feature>
<keyword id="KW-0963">Cytoplasm</keyword>
<keyword id="KW-0324">Glycolysis</keyword>
<keyword id="KW-0413">Isomerase</keyword>
<keyword id="KW-0464">Manganese</keyword>
<keyword id="KW-0479">Metal-binding</keyword>
<keyword id="KW-0346">Stress response</keyword>
<evidence type="ECO:0000250" key="1"/>
<evidence type="ECO:0000250" key="2">
    <source>
        <dbReference type="UniProtKB" id="Q9X519"/>
    </source>
</evidence>
<evidence type="ECO:0000305" key="3"/>
<name>PMGI_MESCR</name>
<dbReference type="EC" id="5.4.2.12"/>
<dbReference type="EMBL" id="U16021">
    <property type="protein sequence ID" value="AAA86979.1"/>
    <property type="molecule type" value="mRNA"/>
</dbReference>
<dbReference type="PIR" id="S60473">
    <property type="entry name" value="S60473"/>
</dbReference>
<dbReference type="SMR" id="Q42908"/>
<dbReference type="UniPathway" id="UPA00109">
    <property type="reaction ID" value="UER00186"/>
</dbReference>
<dbReference type="GO" id="GO:0005737">
    <property type="term" value="C:cytoplasm"/>
    <property type="evidence" value="ECO:0007669"/>
    <property type="project" value="UniProtKB-SubCell"/>
</dbReference>
<dbReference type="GO" id="GO:0030145">
    <property type="term" value="F:manganese ion binding"/>
    <property type="evidence" value="ECO:0007669"/>
    <property type="project" value="InterPro"/>
</dbReference>
<dbReference type="GO" id="GO:0004619">
    <property type="term" value="F:phosphoglycerate mutase activity"/>
    <property type="evidence" value="ECO:0007669"/>
    <property type="project" value="UniProtKB-EC"/>
</dbReference>
<dbReference type="GO" id="GO:0006007">
    <property type="term" value="P:glucose catabolic process"/>
    <property type="evidence" value="ECO:0007669"/>
    <property type="project" value="InterPro"/>
</dbReference>
<dbReference type="GO" id="GO:0006096">
    <property type="term" value="P:glycolytic process"/>
    <property type="evidence" value="ECO:0007669"/>
    <property type="project" value="UniProtKB-UniPathway"/>
</dbReference>
<dbReference type="CDD" id="cd16010">
    <property type="entry name" value="iPGM"/>
    <property type="match status" value="1"/>
</dbReference>
<dbReference type="FunFam" id="3.40.1450.10:FF:000002">
    <property type="entry name" value="2,3-bisphosphoglycerate-independent phosphoglycerate mutase"/>
    <property type="match status" value="1"/>
</dbReference>
<dbReference type="Gene3D" id="3.40.720.10">
    <property type="entry name" value="Alkaline Phosphatase, subunit A"/>
    <property type="match status" value="1"/>
</dbReference>
<dbReference type="Gene3D" id="3.40.1450.10">
    <property type="entry name" value="BPG-independent phosphoglycerate mutase, domain B"/>
    <property type="match status" value="1"/>
</dbReference>
<dbReference type="InterPro" id="IPR017850">
    <property type="entry name" value="Alkaline_phosphatase_core_sf"/>
</dbReference>
<dbReference type="InterPro" id="IPR011258">
    <property type="entry name" value="BPG-indep_PGM_N"/>
</dbReference>
<dbReference type="InterPro" id="IPR006124">
    <property type="entry name" value="Metalloenzyme"/>
</dbReference>
<dbReference type="InterPro" id="IPR036646">
    <property type="entry name" value="PGAM_B_sf"/>
</dbReference>
<dbReference type="InterPro" id="IPR005995">
    <property type="entry name" value="Pgm_bpd_ind"/>
</dbReference>
<dbReference type="NCBIfam" id="TIGR01307">
    <property type="entry name" value="pgm_bpd_ind"/>
    <property type="match status" value="1"/>
</dbReference>
<dbReference type="PANTHER" id="PTHR31637">
    <property type="entry name" value="2,3-BISPHOSPHOGLYCERATE-INDEPENDENT PHOSPHOGLYCERATE MUTASE"/>
    <property type="match status" value="1"/>
</dbReference>
<dbReference type="PANTHER" id="PTHR31637:SF7">
    <property type="entry name" value="2,3-BISPHOSPHOGLYCERATE-INDEPENDENT PHOSPHOGLYCERATE MUTASE 1"/>
    <property type="match status" value="1"/>
</dbReference>
<dbReference type="Pfam" id="PF06415">
    <property type="entry name" value="iPGM_N"/>
    <property type="match status" value="1"/>
</dbReference>
<dbReference type="Pfam" id="PF01676">
    <property type="entry name" value="Metalloenzyme"/>
    <property type="match status" value="1"/>
</dbReference>
<dbReference type="PIRSF" id="PIRSF001492">
    <property type="entry name" value="IPGAM"/>
    <property type="match status" value="1"/>
</dbReference>
<dbReference type="SUPFAM" id="SSF64158">
    <property type="entry name" value="2,3-Bisphosphoglycerate-independent phosphoglycerate mutase, substrate-binding domain"/>
    <property type="match status" value="1"/>
</dbReference>
<dbReference type="SUPFAM" id="SSF53649">
    <property type="entry name" value="Alkaline phosphatase-like"/>
    <property type="match status" value="1"/>
</dbReference>
<protein>
    <recommendedName>
        <fullName>2,3-bisphosphoglycerate-independent phosphoglycerate mutase</fullName>
        <shortName>BPG-independent PGAM</shortName>
        <shortName>Phosphoglyceromutase</shortName>
        <ecNumber>5.4.2.12</ecNumber>
    </recommendedName>
    <alternativeName>
        <fullName>PGAM-I</fullName>
    </alternativeName>
</protein>
<sequence>MGSTEFSWKLADHPKLPKGKTLAMVVLDGWGEASANQYNCIHVAETPTMDSLKQGAPEKWRLIRAHGKAVGLPTEDDMGNSEVGHNALGAGRIYAQGAKLVDLALESGKIYDGEGFNYIKESFETNTLHLIGLLSDGGVHSRLDQLQLLLKGSAERGAKRIRVHILTDGRDVLDGSSVGFVETLENDLAQLRAKGVDAQIASGGGRMYVTMDRYENDWSVVKRGWDAQVLGEAPYKFKNAVEAVKTLRQEPKANDQYLPPFVVVDESGKAVGPIVDGDAVVTLNFRADRMVMLAKALEYEDFDKFDRVRFPKIRYAGMLQYDGELKLPNRYLVSPPEIERTSGEYLVHNGVRTFACSETVKFGHVTFFWNGNRSGYFKPEMEEYVEIPSDSGITFNVQPKMKALEIAEKARDAILSGKFDQVRVNLPNSDMVGHTGDIEATVVACKAADEAVKMIIDAIEQVGGIYVITADHGNAEDMVKRDKKGQPAMDKNGNIQILTSHTLEPVPIAIGGPGLTPGVRFRNDIPTGGLANVAATVMNLHGFEAPSDYEPTLIEVVSN</sequence>
<comment type="function">
    <text evidence="1">Catalyzes the interconversion of 2-phosphoglycerate and 3-phosphoglycerate.</text>
</comment>
<comment type="catalytic activity">
    <reaction>
        <text>(2R)-2-phosphoglycerate = (2R)-3-phosphoglycerate</text>
        <dbReference type="Rhea" id="RHEA:15901"/>
        <dbReference type="ChEBI" id="CHEBI:58272"/>
        <dbReference type="ChEBI" id="CHEBI:58289"/>
        <dbReference type="EC" id="5.4.2.12"/>
    </reaction>
</comment>
<comment type="cofactor">
    <cofactor evidence="1">
        <name>Mn(2+)</name>
        <dbReference type="ChEBI" id="CHEBI:29035"/>
    </cofactor>
    <text evidence="1">Binds 2 manganese ions per subunit.</text>
</comment>
<comment type="pathway">
    <text>Carbohydrate degradation; glycolysis; pyruvate from D-glyceraldehyde 3-phosphate: step 3/5.</text>
</comment>
<comment type="subunit">
    <text evidence="1">Monomer.</text>
</comment>
<comment type="subcellular location">
    <subcellularLocation>
        <location>Cytoplasm</location>
    </subcellularLocation>
</comment>
<comment type="induction">
    <text>By salt stress.</text>
</comment>
<comment type="similarity">
    <text evidence="3">Belongs to the BPG-independent phosphoglycerate mutase family.</text>
</comment>
<accession>Q42908</accession>